<evidence type="ECO:0000250" key="1"/>
<evidence type="ECO:0000255" key="2">
    <source>
        <dbReference type="PROSITE-ProRule" id="PRU00197"/>
    </source>
</evidence>
<evidence type="ECO:0000303" key="3">
    <source>
    </source>
</evidence>
<evidence type="ECO:0007829" key="4">
    <source>
        <dbReference type="PDB" id="2R55"/>
    </source>
</evidence>
<reference key="1">
    <citation type="journal article" date="2002" name="Proc. Natl. Acad. Sci. U.S.A.">
        <title>The cholesterol-regulated StarD4 gene encodes a StAR-related lipid transfer protein with two closely related homologues, StarD5 and StarD6.</title>
        <authorList>
            <person name="Soccio R.E."/>
            <person name="Adams R.M."/>
            <person name="Romanowski M.J."/>
            <person name="Sehayek E."/>
            <person name="Burley S.K."/>
            <person name="Breslow J.L."/>
        </authorList>
    </citation>
    <scope>NUCLEOTIDE SEQUENCE [MRNA] (ISOFORM 1)</scope>
    <source>
        <tissue>Liver</tissue>
    </source>
</reference>
<reference key="2">
    <citation type="journal article" date="2007" name="BMC Genomics">
        <title>The full-ORF clone resource of the German cDNA consortium.</title>
        <authorList>
            <person name="Bechtel S."/>
            <person name="Rosenfelder H."/>
            <person name="Duda A."/>
            <person name="Schmidt C.P."/>
            <person name="Ernst U."/>
            <person name="Wellenreuther R."/>
            <person name="Mehrle A."/>
            <person name="Schuster C."/>
            <person name="Bahr A."/>
            <person name="Bloecker H."/>
            <person name="Heubner D."/>
            <person name="Hoerlein A."/>
            <person name="Michel G."/>
            <person name="Wedler H."/>
            <person name="Koehrer K."/>
            <person name="Ottenwaelder B."/>
            <person name="Poustka A."/>
            <person name="Wiemann S."/>
            <person name="Schupp I."/>
        </authorList>
    </citation>
    <scope>NUCLEOTIDE SEQUENCE [LARGE SCALE MRNA] (ISOFORM 2)</scope>
    <source>
        <tissue>Testis</tissue>
    </source>
</reference>
<reference key="3">
    <citation type="journal article" date="2004" name="Nat. Genet.">
        <title>Complete sequencing and characterization of 21,243 full-length human cDNAs.</title>
        <authorList>
            <person name="Ota T."/>
            <person name="Suzuki Y."/>
            <person name="Nishikawa T."/>
            <person name="Otsuki T."/>
            <person name="Sugiyama T."/>
            <person name="Irie R."/>
            <person name="Wakamatsu A."/>
            <person name="Hayashi K."/>
            <person name="Sato H."/>
            <person name="Nagai K."/>
            <person name="Kimura K."/>
            <person name="Makita H."/>
            <person name="Sekine M."/>
            <person name="Obayashi M."/>
            <person name="Nishi T."/>
            <person name="Shibahara T."/>
            <person name="Tanaka T."/>
            <person name="Ishii S."/>
            <person name="Yamamoto J."/>
            <person name="Saito K."/>
            <person name="Kawai Y."/>
            <person name="Isono Y."/>
            <person name="Nakamura Y."/>
            <person name="Nagahari K."/>
            <person name="Murakami K."/>
            <person name="Yasuda T."/>
            <person name="Iwayanagi T."/>
            <person name="Wagatsuma M."/>
            <person name="Shiratori A."/>
            <person name="Sudo H."/>
            <person name="Hosoiri T."/>
            <person name="Kaku Y."/>
            <person name="Kodaira H."/>
            <person name="Kondo H."/>
            <person name="Sugawara M."/>
            <person name="Takahashi M."/>
            <person name="Kanda K."/>
            <person name="Yokoi T."/>
            <person name="Furuya T."/>
            <person name="Kikkawa E."/>
            <person name="Omura Y."/>
            <person name="Abe K."/>
            <person name="Kamihara K."/>
            <person name="Katsuta N."/>
            <person name="Sato K."/>
            <person name="Tanikawa M."/>
            <person name="Yamazaki M."/>
            <person name="Ninomiya K."/>
            <person name="Ishibashi T."/>
            <person name="Yamashita H."/>
            <person name="Murakawa K."/>
            <person name="Fujimori K."/>
            <person name="Tanai H."/>
            <person name="Kimata M."/>
            <person name="Watanabe M."/>
            <person name="Hiraoka S."/>
            <person name="Chiba Y."/>
            <person name="Ishida S."/>
            <person name="Ono Y."/>
            <person name="Takiguchi S."/>
            <person name="Watanabe S."/>
            <person name="Yosida M."/>
            <person name="Hotuta T."/>
            <person name="Kusano J."/>
            <person name="Kanehori K."/>
            <person name="Takahashi-Fujii A."/>
            <person name="Hara H."/>
            <person name="Tanase T.-O."/>
            <person name="Nomura Y."/>
            <person name="Togiya S."/>
            <person name="Komai F."/>
            <person name="Hara R."/>
            <person name="Takeuchi K."/>
            <person name="Arita M."/>
            <person name="Imose N."/>
            <person name="Musashino K."/>
            <person name="Yuuki H."/>
            <person name="Oshima A."/>
            <person name="Sasaki N."/>
            <person name="Aotsuka S."/>
            <person name="Yoshikawa Y."/>
            <person name="Matsunawa H."/>
            <person name="Ichihara T."/>
            <person name="Shiohata N."/>
            <person name="Sano S."/>
            <person name="Moriya S."/>
            <person name="Momiyama H."/>
            <person name="Satoh N."/>
            <person name="Takami S."/>
            <person name="Terashima Y."/>
            <person name="Suzuki O."/>
            <person name="Nakagawa S."/>
            <person name="Senoh A."/>
            <person name="Mizoguchi H."/>
            <person name="Goto Y."/>
            <person name="Shimizu F."/>
            <person name="Wakebe H."/>
            <person name="Hishigaki H."/>
            <person name="Watanabe T."/>
            <person name="Sugiyama A."/>
            <person name="Takemoto M."/>
            <person name="Kawakami B."/>
            <person name="Yamazaki M."/>
            <person name="Watanabe K."/>
            <person name="Kumagai A."/>
            <person name="Itakura S."/>
            <person name="Fukuzumi Y."/>
            <person name="Fujimori Y."/>
            <person name="Komiyama M."/>
            <person name="Tashiro H."/>
            <person name="Tanigami A."/>
            <person name="Fujiwara T."/>
            <person name="Ono T."/>
            <person name="Yamada K."/>
            <person name="Fujii Y."/>
            <person name="Ozaki K."/>
            <person name="Hirao M."/>
            <person name="Ohmori Y."/>
            <person name="Kawabata A."/>
            <person name="Hikiji T."/>
            <person name="Kobatake N."/>
            <person name="Inagaki H."/>
            <person name="Ikema Y."/>
            <person name="Okamoto S."/>
            <person name="Okitani R."/>
            <person name="Kawakami T."/>
            <person name="Noguchi S."/>
            <person name="Itoh T."/>
            <person name="Shigeta K."/>
            <person name="Senba T."/>
            <person name="Matsumura K."/>
            <person name="Nakajima Y."/>
            <person name="Mizuno T."/>
            <person name="Morinaga M."/>
            <person name="Sasaki M."/>
            <person name="Togashi T."/>
            <person name="Oyama M."/>
            <person name="Hata H."/>
            <person name="Watanabe M."/>
            <person name="Komatsu T."/>
            <person name="Mizushima-Sugano J."/>
            <person name="Satoh T."/>
            <person name="Shirai Y."/>
            <person name="Takahashi Y."/>
            <person name="Nakagawa K."/>
            <person name="Okumura K."/>
            <person name="Nagase T."/>
            <person name="Nomura N."/>
            <person name="Kikuchi H."/>
            <person name="Masuho Y."/>
            <person name="Yamashita R."/>
            <person name="Nakai K."/>
            <person name="Yada T."/>
            <person name="Nakamura Y."/>
            <person name="Ohara O."/>
            <person name="Isogai T."/>
            <person name="Sugano S."/>
        </authorList>
    </citation>
    <scope>NUCLEOTIDE SEQUENCE [LARGE SCALE MRNA] OF 51-213 (ISOFORM 1)</scope>
    <source>
        <tissue>Small intestine</tissue>
    </source>
</reference>
<reference key="4">
    <citation type="journal article" date="2004" name="Genome Res.">
        <title>The status, quality, and expansion of the NIH full-length cDNA project: the Mammalian Gene Collection (MGC).</title>
        <authorList>
            <consortium name="The MGC Project Team"/>
        </authorList>
    </citation>
    <scope>NUCLEOTIDE SEQUENCE [LARGE SCALE MRNA] (ISOFORM 1)</scope>
    <source>
        <tissue>Pancreas</tissue>
    </source>
</reference>
<reference key="5">
    <citation type="journal article" date="2011" name="PLoS ONE">
        <title>Comparative structural analysis of lipid binding START domains.</title>
        <authorList>
            <person name="Thorsell A.G."/>
            <person name="Lee W.H."/>
            <person name="Persson C."/>
            <person name="Siponen M.I."/>
            <person name="Nilsson M."/>
            <person name="Busam R.D."/>
            <person name="Kotenyova T."/>
            <person name="Schuler H."/>
            <person name="Lehtio L."/>
        </authorList>
    </citation>
    <scope>X-RAY CRYSTALLOGRAPHY (2.50 ANGSTROMS) OF 6-213</scope>
</reference>
<name>STAR5_HUMAN</name>
<gene>
    <name type="primary">STARD5</name>
</gene>
<keyword id="KW-0002">3D-structure</keyword>
<keyword id="KW-0025">Alternative splicing</keyword>
<keyword id="KW-0445">Lipid transport</keyword>
<keyword id="KW-0446">Lipid-binding</keyword>
<keyword id="KW-1267">Proteomics identification</keyword>
<keyword id="KW-1185">Reference proteome</keyword>
<keyword id="KW-0813">Transport</keyword>
<accession>Q9NSY2</accession>
<accession>P59094</accession>
<proteinExistence type="evidence at protein level"/>
<sequence>MDPALAAQMSEAVAEKMLQYRRDTAGWKICREGNGVSVSWRPSVEFPGNLYRGEGIVYGTLEEVWDCVKPAVGGLRVKWDENVTGFEIIQSITDTLCVSRTSTPSAAMKLISPRDFVDLVLVKRYEDGTISSNATHVEHPLCPPKPGFVRGFNHPCGCFCEPLPGEPTKTNLVTFFHTDLSGYLPQNVVDSFFPRSMTRFYANLQKAVKQFHE</sequence>
<comment type="function">
    <text evidence="1">May be involved in the intracellular transport of sterols or other lipids. May bind cholesterol or other sterols (By similarity).</text>
</comment>
<comment type="alternative products">
    <event type="alternative splicing"/>
    <isoform>
        <id>Q9NSY2-1</id>
        <name>1</name>
        <sequence type="displayed"/>
    </isoform>
    <isoform>
        <id>Q9NSY2-3</id>
        <name>2</name>
        <sequence type="described" ref="VSP_014871 VSP_014872"/>
    </isoform>
</comment>
<organism>
    <name type="scientific">Homo sapiens</name>
    <name type="common">Human</name>
    <dbReference type="NCBI Taxonomy" id="9606"/>
    <lineage>
        <taxon>Eukaryota</taxon>
        <taxon>Metazoa</taxon>
        <taxon>Chordata</taxon>
        <taxon>Craniata</taxon>
        <taxon>Vertebrata</taxon>
        <taxon>Euteleostomi</taxon>
        <taxon>Mammalia</taxon>
        <taxon>Eutheria</taxon>
        <taxon>Euarchontoglires</taxon>
        <taxon>Primates</taxon>
        <taxon>Haplorrhini</taxon>
        <taxon>Catarrhini</taxon>
        <taxon>Hominidae</taxon>
        <taxon>Homo</taxon>
    </lineage>
</organism>
<feature type="chain" id="PRO_0000220669" description="StAR-related lipid transfer protein 5">
    <location>
        <begin position="1"/>
        <end position="213"/>
    </location>
</feature>
<feature type="domain" description="START" evidence="2">
    <location>
        <begin position="1"/>
        <end position="213"/>
    </location>
</feature>
<feature type="splice variant" id="VSP_014871" description="In isoform 2." evidence="3">
    <original>NGVSVSWRPSVEFPGNLYRGEGIVYGTLEE</original>
    <variation>VPRRRHCIWDTRGGVGLCEASCWRPTSEVG</variation>
    <location>
        <begin position="34"/>
        <end position="63"/>
    </location>
</feature>
<feature type="splice variant" id="VSP_014872" description="In isoform 2." evidence="3">
    <location>
        <begin position="64"/>
        <end position="213"/>
    </location>
</feature>
<feature type="sequence variant" id="VAR_052071" description="In dbSNP:rs4384572.">
    <original>G</original>
    <variation>S</variation>
    <location>
        <position position="74"/>
    </location>
</feature>
<feature type="helix" evidence="4">
    <location>
        <begin position="6"/>
        <end position="22"/>
    </location>
</feature>
<feature type="strand" evidence="4">
    <location>
        <begin position="28"/>
        <end position="31"/>
    </location>
</feature>
<feature type="strand" evidence="4">
    <location>
        <begin position="34"/>
        <end position="42"/>
    </location>
</feature>
<feature type="strand" evidence="4">
    <location>
        <begin position="44"/>
        <end position="59"/>
    </location>
</feature>
<feature type="helix" evidence="4">
    <location>
        <begin position="61"/>
        <end position="68"/>
    </location>
</feature>
<feature type="helix" evidence="4">
    <location>
        <begin position="76"/>
        <end position="79"/>
    </location>
</feature>
<feature type="strand" evidence="4">
    <location>
        <begin position="84"/>
        <end position="91"/>
    </location>
</feature>
<feature type="strand" evidence="4">
    <location>
        <begin position="93"/>
        <end position="102"/>
    </location>
</feature>
<feature type="turn" evidence="4">
    <location>
        <begin position="107"/>
        <end position="110"/>
    </location>
</feature>
<feature type="strand" evidence="4">
    <location>
        <begin position="114"/>
        <end position="124"/>
    </location>
</feature>
<feature type="strand" evidence="4">
    <location>
        <begin position="130"/>
        <end position="136"/>
    </location>
</feature>
<feature type="strand" evidence="4">
    <location>
        <begin position="149"/>
        <end position="153"/>
    </location>
</feature>
<feature type="strand" evidence="4">
    <location>
        <begin position="155"/>
        <end position="162"/>
    </location>
</feature>
<feature type="strand" evidence="4">
    <location>
        <begin position="170"/>
        <end position="176"/>
    </location>
</feature>
<feature type="helix" evidence="4">
    <location>
        <begin position="186"/>
        <end position="209"/>
    </location>
</feature>
<feature type="helix" evidence="4">
    <location>
        <begin position="210"/>
        <end position="212"/>
    </location>
</feature>
<dbReference type="EMBL" id="AF480304">
    <property type="protein sequence ID" value="AAL89654.1"/>
    <property type="molecule type" value="mRNA"/>
</dbReference>
<dbReference type="EMBL" id="AL137657">
    <property type="protein sequence ID" value="CAB70862.2"/>
    <property type="molecule type" value="mRNA"/>
</dbReference>
<dbReference type="EMBL" id="AK026352">
    <property type="status" value="NOT_ANNOTATED_CDS"/>
    <property type="molecule type" value="mRNA"/>
</dbReference>
<dbReference type="EMBL" id="BC004365">
    <property type="protein sequence ID" value="AAH04365.2"/>
    <property type="molecule type" value="mRNA"/>
</dbReference>
<dbReference type="CCDS" id="CCDS10318.1">
    <molecule id="Q9NSY2-1"/>
</dbReference>
<dbReference type="PIR" id="T46357">
    <property type="entry name" value="T46357"/>
</dbReference>
<dbReference type="RefSeq" id="NP_871629.1">
    <molecule id="Q9NSY2-1"/>
    <property type="nucleotide sequence ID" value="NM_181900.3"/>
</dbReference>
<dbReference type="PDB" id="2R55">
    <property type="method" value="X-ray"/>
    <property type="resolution" value="2.50 A"/>
    <property type="chains" value="A/B=6-213"/>
</dbReference>
<dbReference type="PDBsum" id="2R55"/>
<dbReference type="BMRB" id="Q9NSY2"/>
<dbReference type="SMR" id="Q9NSY2"/>
<dbReference type="BioGRID" id="123299">
    <property type="interactions" value="4"/>
</dbReference>
<dbReference type="FunCoup" id="Q9NSY2">
    <property type="interactions" value="479"/>
</dbReference>
<dbReference type="STRING" id="9606.ENSP00000304032"/>
<dbReference type="SwissLipids" id="SLP:000000715"/>
<dbReference type="iPTMnet" id="Q9NSY2"/>
<dbReference type="PhosphoSitePlus" id="Q9NSY2"/>
<dbReference type="BioMuta" id="STARD5"/>
<dbReference type="DMDM" id="25091329"/>
<dbReference type="jPOST" id="Q9NSY2"/>
<dbReference type="MassIVE" id="Q9NSY2"/>
<dbReference type="PaxDb" id="9606-ENSP00000304032"/>
<dbReference type="PeptideAtlas" id="Q9NSY2"/>
<dbReference type="ProteomicsDB" id="82597">
    <molecule id="Q9NSY2-1"/>
</dbReference>
<dbReference type="ProteomicsDB" id="82598">
    <molecule id="Q9NSY2-3"/>
</dbReference>
<dbReference type="Pumba" id="Q9NSY2"/>
<dbReference type="Antibodypedia" id="27966">
    <property type="antibodies" value="158 antibodies from 24 providers"/>
</dbReference>
<dbReference type="DNASU" id="80765"/>
<dbReference type="Ensembl" id="ENST00000302824.7">
    <molecule id="Q9NSY2-1"/>
    <property type="protein sequence ID" value="ENSP00000304032.6"/>
    <property type="gene ID" value="ENSG00000172345.14"/>
</dbReference>
<dbReference type="Ensembl" id="ENST00000325346.6">
    <molecule id="Q9NSY2-3"/>
    <property type="protein sequence ID" value="ENSP00000317519.6"/>
    <property type="gene ID" value="ENSG00000172345.14"/>
</dbReference>
<dbReference type="GeneID" id="80765"/>
<dbReference type="KEGG" id="hsa:80765"/>
<dbReference type="MANE-Select" id="ENST00000302824.7">
    <property type="protein sequence ID" value="ENSP00000304032.6"/>
    <property type="RefSeq nucleotide sequence ID" value="NM_181900.3"/>
    <property type="RefSeq protein sequence ID" value="NP_871629.1"/>
</dbReference>
<dbReference type="UCSC" id="uc002bgm.4">
    <molecule id="Q9NSY2-1"/>
    <property type="organism name" value="human"/>
</dbReference>
<dbReference type="AGR" id="HGNC:18065"/>
<dbReference type="CTD" id="80765"/>
<dbReference type="DisGeNET" id="80765"/>
<dbReference type="GeneCards" id="STARD5"/>
<dbReference type="HGNC" id="HGNC:18065">
    <property type="gene designation" value="STARD5"/>
</dbReference>
<dbReference type="HPA" id="ENSG00000172345">
    <property type="expression patterns" value="Low tissue specificity"/>
</dbReference>
<dbReference type="MIM" id="607050">
    <property type="type" value="gene"/>
</dbReference>
<dbReference type="neXtProt" id="NX_Q9NSY2"/>
<dbReference type="OpenTargets" id="ENSG00000172345"/>
<dbReference type="PharmGKB" id="PA38286"/>
<dbReference type="VEuPathDB" id="HostDB:ENSG00000172345"/>
<dbReference type="eggNOG" id="KOG3845">
    <property type="taxonomic scope" value="Eukaryota"/>
</dbReference>
<dbReference type="GeneTree" id="ENSGT00940000159159"/>
<dbReference type="HOGENOM" id="CLU_093200_1_0_1"/>
<dbReference type="InParanoid" id="Q9NSY2"/>
<dbReference type="OMA" id="PQKVWEC"/>
<dbReference type="OrthoDB" id="196858at2759"/>
<dbReference type="PAN-GO" id="Q9NSY2">
    <property type="GO annotations" value="3 GO annotations based on evolutionary models"/>
</dbReference>
<dbReference type="PhylomeDB" id="Q9NSY2"/>
<dbReference type="PathwayCommons" id="Q9NSY2"/>
<dbReference type="Reactome" id="R-HSA-159418">
    <property type="pathway name" value="Recycling of bile acids and salts"/>
</dbReference>
<dbReference type="BioGRID-ORCS" id="80765">
    <property type="hits" value="16 hits in 1164 CRISPR screens"/>
</dbReference>
<dbReference type="EvolutionaryTrace" id="Q9NSY2"/>
<dbReference type="GeneWiki" id="STARD5"/>
<dbReference type="GenomeRNAi" id="80765"/>
<dbReference type="Pharos" id="Q9NSY2">
    <property type="development level" value="Tbio"/>
</dbReference>
<dbReference type="PRO" id="PR:Q9NSY2"/>
<dbReference type="Proteomes" id="UP000005640">
    <property type="component" value="Chromosome 15"/>
</dbReference>
<dbReference type="RNAct" id="Q9NSY2">
    <property type="molecule type" value="protein"/>
</dbReference>
<dbReference type="Bgee" id="ENSG00000172345">
    <property type="expression patterns" value="Expressed in right lobe of liver and 115 other cell types or tissues"/>
</dbReference>
<dbReference type="ExpressionAtlas" id="Q9NSY2">
    <property type="expression patterns" value="baseline and differential"/>
</dbReference>
<dbReference type="GO" id="GO:0005829">
    <property type="term" value="C:cytosol"/>
    <property type="evidence" value="ECO:0000304"/>
    <property type="project" value="Reactome"/>
</dbReference>
<dbReference type="GO" id="GO:0015485">
    <property type="term" value="F:cholesterol binding"/>
    <property type="evidence" value="ECO:0000314"/>
    <property type="project" value="BHF-UCL"/>
</dbReference>
<dbReference type="GO" id="GO:0120020">
    <property type="term" value="F:cholesterol transfer activity"/>
    <property type="evidence" value="ECO:0000314"/>
    <property type="project" value="BHF-UCL"/>
</dbReference>
<dbReference type="GO" id="GO:0070508">
    <property type="term" value="P:cholesterol import"/>
    <property type="evidence" value="ECO:0000314"/>
    <property type="project" value="BHF-UCL"/>
</dbReference>
<dbReference type="CDD" id="cd08903">
    <property type="entry name" value="START_STARD5-like"/>
    <property type="match status" value="1"/>
</dbReference>
<dbReference type="FunFam" id="3.30.530.20:FF:000031">
    <property type="entry name" value="StAR-related lipid transfer protein 5"/>
    <property type="match status" value="1"/>
</dbReference>
<dbReference type="Gene3D" id="3.30.530.20">
    <property type="match status" value="1"/>
</dbReference>
<dbReference type="InterPro" id="IPR043556">
    <property type="entry name" value="StARD5/6"/>
</dbReference>
<dbReference type="InterPro" id="IPR023393">
    <property type="entry name" value="START-like_dom_sf"/>
</dbReference>
<dbReference type="InterPro" id="IPR002913">
    <property type="entry name" value="START_lipid-bd_dom"/>
</dbReference>
<dbReference type="PANTHER" id="PTHR46374">
    <property type="entry name" value="PROTEIN CBG07384"/>
    <property type="match status" value="1"/>
</dbReference>
<dbReference type="PANTHER" id="PTHR46374:SF3">
    <property type="entry name" value="STAR-RELATED LIPID TRANSFER PROTEIN 5"/>
    <property type="match status" value="1"/>
</dbReference>
<dbReference type="Pfam" id="PF01852">
    <property type="entry name" value="START"/>
    <property type="match status" value="1"/>
</dbReference>
<dbReference type="SMART" id="SM00234">
    <property type="entry name" value="START"/>
    <property type="match status" value="1"/>
</dbReference>
<dbReference type="SUPFAM" id="SSF55961">
    <property type="entry name" value="Bet v1-like"/>
    <property type="match status" value="1"/>
</dbReference>
<dbReference type="PROSITE" id="PS50848">
    <property type="entry name" value="START"/>
    <property type="match status" value="1"/>
</dbReference>
<protein>
    <recommendedName>
        <fullName>StAR-related lipid transfer protein 5</fullName>
    </recommendedName>
    <alternativeName>
        <fullName>START domain-containing protein 5</fullName>
        <shortName>StARD5</shortName>
    </alternativeName>
</protein>